<sequence>MENTILHIHSFQLPQTEQPYPEAMLFDRDTSDSRTVLTQKPNGLEISLNFLQYDGHKGLFIRQDSRTNEPEYIEPKVLKPRNSYILFRNATSRCSQSIDPNSAFVSRVSSYIWGSGIPNPIVRRWFKYMGFFEALYHEVDYPEYIPNKLPKSPKKPKVQKGATKSKKKGAKGKNKVTALQVLVGPTVGVGGRMTVSPMTAFFSNNSHVTCYDPNFVLDTPTREFLMMPLDDITLPSQGPRSDSQEQHVPRQPPDGQDYFDILDIDDFVSPYDDLTTRSFTNRQLFKHATLG</sequence>
<comment type="function">
    <text evidence="1 3 4">Mating type proteins are sequence specific DNA-binding proteins that act as master switches in yeast differentiation by controlling gene expression in a cell type-specific fashion. Transcriptional activator that induces the transcription of A cell-specific genes (By similarity). Required for repression of conjugation in diploid cells.</text>
</comment>
<comment type="subcellular location">
    <subcellularLocation>
        <location evidence="1">Nucleus</location>
    </subcellularLocation>
</comment>
<comment type="developmental stage">
    <text evidence="4">Only present in A-cells and in A/B diploid cells.</text>
</comment>
<comment type="similarity">
    <text evidence="5">Belongs to the MATA2 family.</text>
</comment>
<feature type="chain" id="PRO_0000048583" description="Mating-type protein A2">
    <location>
        <begin position="1"/>
        <end position="291"/>
    </location>
</feature>
<feature type="DNA-binding region" description="HMG box">
    <location>
        <begin position="73"/>
        <end position="144"/>
    </location>
</feature>
<feature type="region of interest" description="Disordered" evidence="2">
    <location>
        <begin position="148"/>
        <end position="173"/>
    </location>
</feature>
<feature type="region of interest" description="Disordered" evidence="2">
    <location>
        <begin position="232"/>
        <end position="255"/>
    </location>
</feature>
<feature type="compositionally biased region" description="Basic residues" evidence="2">
    <location>
        <begin position="151"/>
        <end position="173"/>
    </location>
</feature>
<keyword id="KW-0010">Activator</keyword>
<keyword id="KW-0238">DNA-binding</keyword>
<keyword id="KW-0539">Nucleus</keyword>
<keyword id="KW-0804">Transcription</keyword>
<keyword id="KW-0805">Transcription regulation</keyword>
<dbReference type="EMBL" id="AJ007708">
    <property type="protein sequence ID" value="CAA07613.1"/>
    <property type="molecule type" value="Genomic_DNA"/>
</dbReference>
<dbReference type="EMBL" id="AJ617306">
    <property type="protein sequence ID" value="CAE84423.1"/>
    <property type="molecule type" value="Genomic_DNA"/>
</dbReference>
<dbReference type="VEuPathDB" id="FungiDB:YALI1_C09878g"/>
<dbReference type="GO" id="GO:0005634">
    <property type="term" value="C:nucleus"/>
    <property type="evidence" value="ECO:0007669"/>
    <property type="project" value="UniProtKB-SubCell"/>
</dbReference>
<dbReference type="GO" id="GO:0003677">
    <property type="term" value="F:DNA binding"/>
    <property type="evidence" value="ECO:0007669"/>
    <property type="project" value="UniProtKB-KW"/>
</dbReference>
<organism>
    <name type="scientific">Yarrowia lipolytica</name>
    <name type="common">Candida lipolytica</name>
    <dbReference type="NCBI Taxonomy" id="4952"/>
    <lineage>
        <taxon>Eukaryota</taxon>
        <taxon>Fungi</taxon>
        <taxon>Dikarya</taxon>
        <taxon>Ascomycota</taxon>
        <taxon>Saccharomycotina</taxon>
        <taxon>Dipodascomycetes</taxon>
        <taxon>Dipodascales</taxon>
        <taxon>Dipodascales incertae sedis</taxon>
        <taxon>Yarrowia</taxon>
    </lineage>
</organism>
<proteinExistence type="evidence at transcript level"/>
<accession>O93958</accession>
<evidence type="ECO:0000250" key="1"/>
<evidence type="ECO:0000256" key="2">
    <source>
        <dbReference type="SAM" id="MobiDB-lite"/>
    </source>
</evidence>
<evidence type="ECO:0000269" key="3">
    <source>
    </source>
</evidence>
<evidence type="ECO:0000269" key="4">
    <source>
    </source>
</evidence>
<evidence type="ECO:0000305" key="5"/>
<name>MATA2_YARLL</name>
<reference key="1">
    <citation type="journal article" date="1999" name="Mol. Gen. Genet.">
        <title>The MATA locus of the dimorphic yeast Yarrowia lipolytica consists of two divergently orientated genes.</title>
        <authorList>
            <person name="Kurischko C."/>
            <person name="Schilhabel M.B."/>
            <person name="Kunze I."/>
            <person name="Franzl E."/>
        </authorList>
    </citation>
    <scope>NUCLEOTIDE SEQUENCE [GENOMIC DNA]</scope>
    <scope>FUNCTION</scope>
    <source>
        <strain>ATCC 20460 / CBS 7504 / CLIB 89 / VTT C-10879 / W29 / IFP29</strain>
    </source>
</reference>
<reference key="2">
    <citation type="journal article" date="2004" name="Proc. Natl. Acad. Sci. U.S.A.">
        <title>Evolution of the MAT locus and its Ho endonuclease in yeast species.</title>
        <authorList>
            <person name="Butler G."/>
            <person name="Kenny C."/>
            <person name="Fagan A."/>
            <person name="Kurischko C."/>
            <person name="Gaillardin C."/>
            <person name="Wolfe K.H."/>
        </authorList>
    </citation>
    <scope>NUCLEOTIDE SEQUENCE [GENOMIC DNA]</scope>
    <source>
        <strain>ATCC 20460 / CBS 7504 / CLIB 89 / VTT C-10879 / W29 / IFP29</strain>
    </source>
</reference>
<reference key="3">
    <citation type="journal article" date="1992" name="Mol. Gen. Genet.">
        <title>Cloning of the mating-type gene MATA of the yeast Yarrowia lipolytica.</title>
        <authorList>
            <person name="Kurischko C."/>
            <person name="Fournier P."/>
            <person name="Chasles M."/>
            <person name="Weber H."/>
            <person name="Gaillardin C."/>
        </authorList>
    </citation>
    <scope>FUNCTION</scope>
    <scope>DEVELOPMENTAL STAGE</scope>
    <source>
        <strain>ATCC 20460 / CBS 7504 / CLIB 89 / VTT C-10879 / W29 / IFP29</strain>
    </source>
</reference>
<gene>
    <name type="primary">MATA2</name>
</gene>
<protein>
    <recommendedName>
        <fullName>Mating-type protein A2</fullName>
    </recommendedName>
    <alternativeName>
        <fullName>MATA2 transcription factor</fullName>
    </alternativeName>
</protein>